<protein>
    <recommendedName>
        <fullName evidence="1">Recombination protein RecR</fullName>
    </recommendedName>
</protein>
<organism>
    <name type="scientific">Bacillus anthracis (strain A0248)</name>
    <dbReference type="NCBI Taxonomy" id="592021"/>
    <lineage>
        <taxon>Bacteria</taxon>
        <taxon>Bacillati</taxon>
        <taxon>Bacillota</taxon>
        <taxon>Bacilli</taxon>
        <taxon>Bacillales</taxon>
        <taxon>Bacillaceae</taxon>
        <taxon>Bacillus</taxon>
        <taxon>Bacillus cereus group</taxon>
    </lineage>
</organism>
<evidence type="ECO:0000255" key="1">
    <source>
        <dbReference type="HAMAP-Rule" id="MF_00017"/>
    </source>
</evidence>
<sequence length="198" mass="21904">MHYPEPISKLIDSFMKLPGIGPKTAVRLAFFVLDMKEDDVLGFAKALVNAKRDLAYCSVCGHITDRDPCYICNDSHRDQSVVCVVQEPKDVIAMEKMKEYQGVYHVLRGAISPMGGIGPEDINIPQLLKRLHDETVQEVILATNPNIEGEATAMYISRLLKPTGIKVTRIAHGLPVGGDLEYADEVTLSKALEGRREV</sequence>
<reference key="1">
    <citation type="submission" date="2009-04" db="EMBL/GenBank/DDBJ databases">
        <title>Genome sequence of Bacillus anthracis A0248.</title>
        <authorList>
            <person name="Dodson R.J."/>
            <person name="Munk A.C."/>
            <person name="Bruce D."/>
            <person name="Detter C."/>
            <person name="Tapia R."/>
            <person name="Sutton G."/>
            <person name="Sims D."/>
            <person name="Brettin T."/>
        </authorList>
    </citation>
    <scope>NUCLEOTIDE SEQUENCE [LARGE SCALE GENOMIC DNA]</scope>
    <source>
        <strain>A0248</strain>
    </source>
</reference>
<keyword id="KW-0227">DNA damage</keyword>
<keyword id="KW-0233">DNA recombination</keyword>
<keyword id="KW-0234">DNA repair</keyword>
<keyword id="KW-0479">Metal-binding</keyword>
<keyword id="KW-0862">Zinc</keyword>
<keyword id="KW-0863">Zinc-finger</keyword>
<name>RECR_BACAA</name>
<gene>
    <name evidence="1" type="primary">recR</name>
    <name type="ordered locus">BAA_0028</name>
</gene>
<accession>C3P9H0</accession>
<dbReference type="EMBL" id="CP001598">
    <property type="protein sequence ID" value="ACQ49434.1"/>
    <property type="molecule type" value="Genomic_DNA"/>
</dbReference>
<dbReference type="RefSeq" id="WP_000559171.1">
    <property type="nucleotide sequence ID" value="NC_012659.1"/>
</dbReference>
<dbReference type="SMR" id="C3P9H0"/>
<dbReference type="GeneID" id="45020060"/>
<dbReference type="KEGG" id="bai:BAA_0028"/>
<dbReference type="HOGENOM" id="CLU_060739_1_0_9"/>
<dbReference type="GO" id="GO:0003677">
    <property type="term" value="F:DNA binding"/>
    <property type="evidence" value="ECO:0007669"/>
    <property type="project" value="UniProtKB-UniRule"/>
</dbReference>
<dbReference type="GO" id="GO:0008270">
    <property type="term" value="F:zinc ion binding"/>
    <property type="evidence" value="ECO:0007669"/>
    <property type="project" value="UniProtKB-KW"/>
</dbReference>
<dbReference type="GO" id="GO:0006310">
    <property type="term" value="P:DNA recombination"/>
    <property type="evidence" value="ECO:0007669"/>
    <property type="project" value="UniProtKB-UniRule"/>
</dbReference>
<dbReference type="GO" id="GO:0006281">
    <property type="term" value="P:DNA repair"/>
    <property type="evidence" value="ECO:0007669"/>
    <property type="project" value="UniProtKB-UniRule"/>
</dbReference>
<dbReference type="CDD" id="cd01025">
    <property type="entry name" value="TOPRIM_recR"/>
    <property type="match status" value="1"/>
</dbReference>
<dbReference type="Gene3D" id="3.30.60.80">
    <property type="match status" value="1"/>
</dbReference>
<dbReference type="Gene3D" id="3.40.1360.10">
    <property type="match status" value="1"/>
</dbReference>
<dbReference type="Gene3D" id="6.10.250.240">
    <property type="match status" value="1"/>
</dbReference>
<dbReference type="Gene3D" id="1.10.8.420">
    <property type="entry name" value="RecR Domain 1"/>
    <property type="match status" value="1"/>
</dbReference>
<dbReference type="HAMAP" id="MF_00017">
    <property type="entry name" value="RecR"/>
    <property type="match status" value="1"/>
</dbReference>
<dbReference type="InterPro" id="IPR000093">
    <property type="entry name" value="DNA_Rcmb_RecR"/>
</dbReference>
<dbReference type="InterPro" id="IPR023627">
    <property type="entry name" value="Rcmb_RecR"/>
</dbReference>
<dbReference type="InterPro" id="IPR015967">
    <property type="entry name" value="Rcmb_RecR_Znf"/>
</dbReference>
<dbReference type="InterPro" id="IPR006171">
    <property type="entry name" value="TOPRIM_dom"/>
</dbReference>
<dbReference type="InterPro" id="IPR034137">
    <property type="entry name" value="TOPRIM_RecR"/>
</dbReference>
<dbReference type="NCBIfam" id="TIGR00615">
    <property type="entry name" value="recR"/>
    <property type="match status" value="1"/>
</dbReference>
<dbReference type="PANTHER" id="PTHR30446">
    <property type="entry name" value="RECOMBINATION PROTEIN RECR"/>
    <property type="match status" value="1"/>
</dbReference>
<dbReference type="PANTHER" id="PTHR30446:SF0">
    <property type="entry name" value="RECOMBINATION PROTEIN RECR"/>
    <property type="match status" value="1"/>
</dbReference>
<dbReference type="Pfam" id="PF21175">
    <property type="entry name" value="RecR_C"/>
    <property type="match status" value="1"/>
</dbReference>
<dbReference type="Pfam" id="PF21176">
    <property type="entry name" value="RecR_HhH"/>
    <property type="match status" value="1"/>
</dbReference>
<dbReference type="Pfam" id="PF02132">
    <property type="entry name" value="RecR_ZnF"/>
    <property type="match status" value="1"/>
</dbReference>
<dbReference type="Pfam" id="PF13662">
    <property type="entry name" value="Toprim_4"/>
    <property type="match status" value="1"/>
</dbReference>
<dbReference type="SMART" id="SM00493">
    <property type="entry name" value="TOPRIM"/>
    <property type="match status" value="1"/>
</dbReference>
<dbReference type="SUPFAM" id="SSF111304">
    <property type="entry name" value="Recombination protein RecR"/>
    <property type="match status" value="1"/>
</dbReference>
<dbReference type="PROSITE" id="PS01300">
    <property type="entry name" value="RECR"/>
    <property type="match status" value="1"/>
</dbReference>
<dbReference type="PROSITE" id="PS50880">
    <property type="entry name" value="TOPRIM"/>
    <property type="match status" value="1"/>
</dbReference>
<feature type="chain" id="PRO_1000116671" description="Recombination protein RecR">
    <location>
        <begin position="1"/>
        <end position="198"/>
    </location>
</feature>
<feature type="domain" description="Toprim" evidence="1">
    <location>
        <begin position="80"/>
        <end position="175"/>
    </location>
</feature>
<feature type="zinc finger region" description="C4-type" evidence="1">
    <location>
        <begin position="57"/>
        <end position="72"/>
    </location>
</feature>
<proteinExistence type="inferred from homology"/>
<comment type="function">
    <text evidence="1">May play a role in DNA repair. It seems to be involved in an RecBC-independent recombinational process of DNA repair. It may act with RecF and RecO.</text>
</comment>
<comment type="similarity">
    <text evidence="1">Belongs to the RecR family.</text>
</comment>